<protein>
    <recommendedName>
        <fullName>Nitrite transporter NirC</fullName>
    </recommendedName>
</protein>
<sequence length="268" mass="28563">MFTDTINKCAANAARIARLSANNPLGFWVSSAMAGAYVGLGIILIFTLGNLLDPSVRPLVMGATFGIALTLVIIAGSELFTGHTMFLTFGVKAGSISHGQMWAILPQTWLGNLVGSVFVAMLYSWGGGSLLPVDTSIVHSVALAKTTAPAMVLFFKGALCNWLVCLAIWMALRTEGAAKFIAIWWCLLAFIASGYEHSIANMTLFALSWFGNHSEAYTLAGIGHNLLWVTLGNTLSGAVFMGLGYWYATPKANRPVADKFNQTETAAG</sequence>
<gene>
    <name type="primary">nirC</name>
    <name type="ordered locus">b3367</name>
    <name type="ordered locus">JW3330</name>
</gene>
<feature type="chain" id="PRO_0000094724" description="Nitrite transporter NirC">
    <location>
        <begin position="1"/>
        <end position="268"/>
    </location>
</feature>
<feature type="topological domain" description="Cytoplasmic" evidence="1">
    <location>
        <begin position="1"/>
        <end position="25"/>
    </location>
</feature>
<feature type="transmembrane region" description="Helical" evidence="1">
    <location>
        <begin position="26"/>
        <end position="46"/>
    </location>
</feature>
<feature type="topological domain" description="Periplasmic" evidence="1">
    <location>
        <begin position="47"/>
        <end position="59"/>
    </location>
</feature>
<feature type="transmembrane region" description="Helical" evidence="1">
    <location>
        <begin position="60"/>
        <end position="80"/>
    </location>
</feature>
<feature type="topological domain" description="Cytoplasmic" evidence="1">
    <location>
        <begin position="81"/>
        <end position="112"/>
    </location>
</feature>
<feature type="transmembrane region" description="Helical" evidence="1">
    <location>
        <begin position="113"/>
        <end position="133"/>
    </location>
</feature>
<feature type="topological domain" description="Periplasmic" evidence="1">
    <location>
        <begin position="134"/>
        <end position="151"/>
    </location>
</feature>
<feature type="transmembrane region" description="Helical" evidence="1">
    <location>
        <begin position="152"/>
        <end position="172"/>
    </location>
</feature>
<feature type="topological domain" description="Cytoplasmic" evidence="1">
    <location>
        <begin position="173"/>
        <end position="179"/>
    </location>
</feature>
<feature type="transmembrane region" description="Helical" evidence="1">
    <location>
        <begin position="180"/>
        <end position="200"/>
    </location>
</feature>
<feature type="topological domain" description="Periplasmic" evidence="1">
    <location>
        <begin position="201"/>
        <end position="225"/>
    </location>
</feature>
<feature type="transmembrane region" description="Helical" evidence="1">
    <location>
        <begin position="226"/>
        <end position="246"/>
    </location>
</feature>
<feature type="topological domain" description="Cytoplasmic" evidence="1">
    <location>
        <begin position="247"/>
        <end position="268"/>
    </location>
</feature>
<organism>
    <name type="scientific">Escherichia coli (strain K12)</name>
    <dbReference type="NCBI Taxonomy" id="83333"/>
    <lineage>
        <taxon>Bacteria</taxon>
        <taxon>Pseudomonadati</taxon>
        <taxon>Pseudomonadota</taxon>
        <taxon>Gammaproteobacteria</taxon>
        <taxon>Enterobacterales</taxon>
        <taxon>Enterobacteriaceae</taxon>
        <taxon>Escherichia</taxon>
    </lineage>
</organism>
<accession>P0AC26</accession>
<accession>P11097</accession>
<accession>P78112</accession>
<accession>Q2M733</accession>
<keyword id="KW-0997">Cell inner membrane</keyword>
<keyword id="KW-1003">Cell membrane</keyword>
<keyword id="KW-0472">Membrane</keyword>
<keyword id="KW-0534">Nitrate assimilation</keyword>
<keyword id="KW-1185">Reference proteome</keyword>
<keyword id="KW-0812">Transmembrane</keyword>
<keyword id="KW-1133">Transmembrane helix</keyword>
<keyword id="KW-0813">Transport</keyword>
<reference key="1">
    <citation type="journal article" date="1989" name="Nucleic Acids Res.">
        <title>Cloning of binding sequences for the Escherichia coli transcription activators, FNR and CRP: location of bases involved in discrimination between FNR and CRP.</title>
        <authorList>
            <person name="Bell A.I."/>
            <person name="Gaston K.L."/>
            <person name="Cole J.A."/>
            <person name="Busby S.J.W."/>
        </authorList>
    </citation>
    <scope>NUCLEOTIDE SEQUENCE [GENOMIC DNA]</scope>
    <source>
        <strain>K12</strain>
    </source>
</reference>
<reference key="2">
    <citation type="journal article" date="1990" name="Eur. J. Biochem.">
        <title>Nucleotide sequence, organisation and structural analysis of the products of genes in the nirB-cysG region of the Escherichia coli K-12 chromosome.</title>
        <authorList>
            <person name="Peakman T."/>
            <person name="Crouzet J."/>
            <person name="Mayaux J.F."/>
            <person name="Busby S.J.W."/>
            <person name="Mohan S."/>
            <person name="Harborne N."/>
            <person name="Wootton J."/>
            <person name="Nicolson R."/>
            <person name="Cole J.A."/>
        </authorList>
    </citation>
    <scope>NUCLEOTIDE SEQUENCE [GENOMIC DNA]</scope>
    <source>
        <strain>K12</strain>
    </source>
</reference>
<reference key="3">
    <citation type="journal article" date="1997" name="Science">
        <title>The complete genome sequence of Escherichia coli K-12.</title>
        <authorList>
            <person name="Blattner F.R."/>
            <person name="Plunkett G. III"/>
            <person name="Bloch C.A."/>
            <person name="Perna N.T."/>
            <person name="Burland V."/>
            <person name="Riley M."/>
            <person name="Collado-Vides J."/>
            <person name="Glasner J.D."/>
            <person name="Rode C.K."/>
            <person name="Mayhew G.F."/>
            <person name="Gregor J."/>
            <person name="Davis N.W."/>
            <person name="Kirkpatrick H.A."/>
            <person name="Goeden M.A."/>
            <person name="Rose D.J."/>
            <person name="Mau B."/>
            <person name="Shao Y."/>
        </authorList>
    </citation>
    <scope>NUCLEOTIDE SEQUENCE [LARGE SCALE GENOMIC DNA]</scope>
    <source>
        <strain>K12 / MG1655 / ATCC 47076</strain>
    </source>
</reference>
<reference key="4">
    <citation type="journal article" date="2006" name="Mol. Syst. Biol.">
        <title>Highly accurate genome sequences of Escherichia coli K-12 strains MG1655 and W3110.</title>
        <authorList>
            <person name="Hayashi K."/>
            <person name="Morooka N."/>
            <person name="Yamamoto Y."/>
            <person name="Fujita K."/>
            <person name="Isono K."/>
            <person name="Choi S."/>
            <person name="Ohtsubo E."/>
            <person name="Baba T."/>
            <person name="Wanner B.L."/>
            <person name="Mori H."/>
            <person name="Horiuchi T."/>
        </authorList>
    </citation>
    <scope>NUCLEOTIDE SEQUENCE [LARGE SCALE GENOMIC DNA]</scope>
    <source>
        <strain>K12 / W3110 / ATCC 27325 / DSM 5911</strain>
    </source>
</reference>
<reference key="5">
    <citation type="journal article" date="2002" name="Mol. Microbiol.">
        <title>The roles of the polytopic membrane proteins NarK, NarU and NirC in Escherichia coli K-12: two nitrate and three nitrite transporters.</title>
        <authorList>
            <person name="Clegg S."/>
            <person name="Yu F."/>
            <person name="Griffiths L."/>
            <person name="Cole J.A."/>
        </authorList>
    </citation>
    <scope>FUNCTION</scope>
    <source>
        <strain>K12</strain>
    </source>
</reference>
<reference key="6">
    <citation type="journal article" date="2005" name="Biochem. Soc. Trans.">
        <title>Nitrate and nitrite transport in Escherichia coli.</title>
        <authorList>
            <person name="Jia W."/>
            <person name="Cole J.A."/>
        </authorList>
    </citation>
    <scope>FUNCTION</scope>
</reference>
<reference key="7">
    <citation type="journal article" date="2005" name="Science">
        <title>Global topology analysis of the Escherichia coli inner membrane proteome.</title>
        <authorList>
            <person name="Daley D.O."/>
            <person name="Rapp M."/>
            <person name="Granseth E."/>
            <person name="Melen K."/>
            <person name="Drew D."/>
            <person name="von Heijne G."/>
        </authorList>
    </citation>
    <scope>TOPOLOGY [LARGE SCALE ANALYSIS]</scope>
    <scope>SUBCELLULAR LOCATION</scope>
    <source>
        <strain>K12 / MG1655 / ATCC 47076</strain>
    </source>
</reference>
<reference key="8">
    <citation type="journal article" date="2009" name="Biochem. J.">
        <title>A single channel for nitrate uptake, nitrite export and nitrite uptake by Escherichia coli NarU and a role for NirC in nitrite export and uptake.</title>
        <authorList>
            <person name="Jia W."/>
            <person name="Tovell N."/>
            <person name="Clegg S."/>
            <person name="Trimmer M."/>
            <person name="Cole J."/>
        </authorList>
    </citation>
    <scope>FUNCTION</scope>
</reference>
<name>NIRC_ECOLI</name>
<evidence type="ECO:0000255" key="1"/>
<evidence type="ECO:0000269" key="2">
    <source>
    </source>
</evidence>
<evidence type="ECO:0000269" key="3">
    <source>
    </source>
</evidence>
<evidence type="ECO:0000269" key="4">
    <source>
    </source>
</evidence>
<evidence type="ECO:0000269" key="5">
    <source>
    </source>
</evidence>
<evidence type="ECO:0000305" key="6"/>
<dbReference type="EMBL" id="X14202">
    <property type="protein sequence ID" value="CAA32418.1"/>
    <property type="status" value="ALT_INIT"/>
    <property type="molecule type" value="Genomic_DNA"/>
</dbReference>
<dbReference type="EMBL" id="U18997">
    <property type="protein sequence ID" value="AAA58164.1"/>
    <property type="status" value="ALT_INIT"/>
    <property type="molecule type" value="Genomic_DNA"/>
</dbReference>
<dbReference type="EMBL" id="U00096">
    <property type="protein sequence ID" value="AAC76392.2"/>
    <property type="molecule type" value="Genomic_DNA"/>
</dbReference>
<dbReference type="EMBL" id="AP009048">
    <property type="protein sequence ID" value="BAE77923.1"/>
    <property type="molecule type" value="Genomic_DNA"/>
</dbReference>
<dbReference type="PIR" id="B65131">
    <property type="entry name" value="B65131"/>
</dbReference>
<dbReference type="RefSeq" id="WP_000493556.1">
    <property type="nucleotide sequence ID" value="NZ_STEB01000004.1"/>
</dbReference>
<dbReference type="RefSeq" id="YP_026212.2">
    <property type="nucleotide sequence ID" value="NC_000913.3"/>
</dbReference>
<dbReference type="SMR" id="P0AC26"/>
<dbReference type="BioGRID" id="4262477">
    <property type="interactions" value="13"/>
</dbReference>
<dbReference type="FunCoup" id="P0AC26">
    <property type="interactions" value="42"/>
</dbReference>
<dbReference type="STRING" id="511145.b3367"/>
<dbReference type="TCDB" id="1.A.16.3.1">
    <property type="family name" value="the formate-nitrite transporter (fnt) family"/>
</dbReference>
<dbReference type="PaxDb" id="511145-b3367"/>
<dbReference type="EnsemblBacteria" id="AAC76392">
    <property type="protein sequence ID" value="AAC76392"/>
    <property type="gene ID" value="b3367"/>
</dbReference>
<dbReference type="GeneID" id="2847757"/>
<dbReference type="GeneID" id="75206311"/>
<dbReference type="KEGG" id="ecj:JW3330"/>
<dbReference type="KEGG" id="eco:b3367"/>
<dbReference type="KEGG" id="ecoc:C3026_18285"/>
<dbReference type="PATRIC" id="fig|1411691.4.peg.3362"/>
<dbReference type="EchoBASE" id="EB0648"/>
<dbReference type="eggNOG" id="COG2116">
    <property type="taxonomic scope" value="Bacteria"/>
</dbReference>
<dbReference type="HOGENOM" id="CLU_036896_2_1_6"/>
<dbReference type="InParanoid" id="P0AC26"/>
<dbReference type="OMA" id="SIRPLVM"/>
<dbReference type="OrthoDB" id="9786493at2"/>
<dbReference type="PhylomeDB" id="P0AC26"/>
<dbReference type="BioCyc" id="EcoCyc:NIRC-MONOMER"/>
<dbReference type="BioCyc" id="MetaCyc:NIRC-MONOMER"/>
<dbReference type="PHI-base" id="PHI:11706"/>
<dbReference type="PHI-base" id="PHI:3597"/>
<dbReference type="PRO" id="PR:P0AC26"/>
<dbReference type="Proteomes" id="UP000000625">
    <property type="component" value="Chromosome"/>
</dbReference>
<dbReference type="GO" id="GO:0005886">
    <property type="term" value="C:plasma membrane"/>
    <property type="evidence" value="ECO:0000314"/>
    <property type="project" value="EcoCyc"/>
</dbReference>
<dbReference type="GO" id="GO:0015499">
    <property type="term" value="F:formate transmembrane transporter activity"/>
    <property type="evidence" value="ECO:0000318"/>
    <property type="project" value="GO_Central"/>
</dbReference>
<dbReference type="GO" id="GO:0015113">
    <property type="term" value="F:nitrite transmembrane transporter activity"/>
    <property type="evidence" value="ECO:0000269"/>
    <property type="project" value="EcoCyc"/>
</dbReference>
<dbReference type="GO" id="GO:0015724">
    <property type="term" value="P:formate transport"/>
    <property type="evidence" value="ECO:0000318"/>
    <property type="project" value="GO_Central"/>
</dbReference>
<dbReference type="GO" id="GO:0042128">
    <property type="term" value="P:nitrate assimilation"/>
    <property type="evidence" value="ECO:0007669"/>
    <property type="project" value="UniProtKB-KW"/>
</dbReference>
<dbReference type="GO" id="GO:0015707">
    <property type="term" value="P:nitrite transport"/>
    <property type="evidence" value="ECO:0000269"/>
    <property type="project" value="EcoCyc"/>
</dbReference>
<dbReference type="FunFam" id="1.20.1080.10:FF:000008">
    <property type="entry name" value="Nitrite transporter NirC"/>
    <property type="match status" value="1"/>
</dbReference>
<dbReference type="Gene3D" id="1.20.1080.10">
    <property type="entry name" value="Glycerol uptake facilitator protein"/>
    <property type="match status" value="1"/>
</dbReference>
<dbReference type="InterPro" id="IPR023271">
    <property type="entry name" value="Aquaporin-like"/>
</dbReference>
<dbReference type="InterPro" id="IPR000292">
    <property type="entry name" value="For/NO2_transpt"/>
</dbReference>
<dbReference type="InterPro" id="IPR024002">
    <property type="entry name" value="For/NO2_transpt_CS"/>
</dbReference>
<dbReference type="NCBIfam" id="TIGR00790">
    <property type="entry name" value="fnt"/>
    <property type="match status" value="1"/>
</dbReference>
<dbReference type="NCBIfam" id="NF008595">
    <property type="entry name" value="PRK11562.1"/>
    <property type="match status" value="1"/>
</dbReference>
<dbReference type="PANTHER" id="PTHR30520">
    <property type="entry name" value="FORMATE TRANSPORTER-RELATED"/>
    <property type="match status" value="1"/>
</dbReference>
<dbReference type="PANTHER" id="PTHR30520:SF8">
    <property type="entry name" value="NITRITE TRANSPORTER NIRC"/>
    <property type="match status" value="1"/>
</dbReference>
<dbReference type="Pfam" id="PF01226">
    <property type="entry name" value="Form_Nir_trans"/>
    <property type="match status" value="1"/>
</dbReference>
<dbReference type="PROSITE" id="PS01005">
    <property type="entry name" value="FORMATE_NITRITE_TP_1"/>
    <property type="match status" value="1"/>
</dbReference>
<dbReference type="PROSITE" id="PS01006">
    <property type="entry name" value="FORMATE_NITRITE_TP_2"/>
    <property type="match status" value="1"/>
</dbReference>
<proteinExistence type="evidence at protein level"/>
<comment type="function">
    <text evidence="2 3 5">Catalyzes nitrite uptake and nitrite export across the cytoplasmic membrane. Is up to 10-fold more active than NarK or NarU in nitrite uptake for subsequent reduction in the cytoplasm by the NirB/NirD nitrite reductase.</text>
</comment>
<comment type="subcellular location">
    <subcellularLocation>
        <location evidence="4">Cell inner membrane</location>
        <topology evidence="4">Multi-pass membrane protein</topology>
    </subcellularLocation>
</comment>
<comment type="similarity">
    <text evidence="6">Belongs to the FNT transporter (TC 1.A.16) family.</text>
</comment>
<comment type="sequence caution" evidence="6">
    <conflict type="erroneous initiation">
        <sequence resource="EMBL-CDS" id="AAA58164"/>
    </conflict>
    <text>Truncated N-terminus.</text>
</comment>
<comment type="sequence caution" evidence="6">
    <conflict type="erroneous initiation">
        <sequence resource="EMBL-CDS" id="CAA32418"/>
    </conflict>
    <text>Truncated N-terminus.</text>
</comment>